<dbReference type="EC" id="2.3.2.-" evidence="14"/>
<dbReference type="EMBL" id="J04076">
    <property type="protein sequence ID" value="AAA52372.1"/>
    <property type="status" value="ALT_SEQ"/>
    <property type="molecule type" value="mRNA"/>
</dbReference>
<dbReference type="EMBL" id="AF139463">
    <property type="protein sequence ID" value="AAD24588.1"/>
    <property type="molecule type" value="mRNA"/>
</dbReference>
<dbReference type="EMBL" id="AK091399">
    <property type="protein sequence ID" value="BAG52349.1"/>
    <property type="molecule type" value="mRNA"/>
</dbReference>
<dbReference type="EMBL" id="AK312813">
    <property type="protein sequence ID" value="BAG35671.1"/>
    <property type="molecule type" value="mRNA"/>
</dbReference>
<dbReference type="EMBL" id="CR749641">
    <property type="protein sequence ID" value="CAH18435.1"/>
    <property type="molecule type" value="mRNA"/>
</dbReference>
<dbReference type="EMBL" id="AL133417">
    <property type="status" value="NOT_ANNOTATED_CDS"/>
    <property type="molecule type" value="Genomic_DNA"/>
</dbReference>
<dbReference type="EMBL" id="CH471083">
    <property type="protein sequence ID" value="EAW54238.1"/>
    <property type="molecule type" value="Genomic_DNA"/>
</dbReference>
<dbReference type="EMBL" id="CH471083">
    <property type="protein sequence ID" value="EAW54239.1"/>
    <property type="molecule type" value="Genomic_DNA"/>
</dbReference>
<dbReference type="EMBL" id="BC035625">
    <property type="protein sequence ID" value="AAH35625.1"/>
    <property type="molecule type" value="mRNA"/>
</dbReference>
<dbReference type="EMBL" id="X53700">
    <property type="status" value="NOT_ANNOTATED_CDS"/>
    <property type="molecule type" value="Genomic_DNA"/>
</dbReference>
<dbReference type="CCDS" id="CCDS44409.1">
    <molecule id="P11161-2"/>
</dbReference>
<dbReference type="CCDS" id="CCDS7267.1">
    <molecule id="P11161-1"/>
</dbReference>
<dbReference type="RefSeq" id="NP_000390.2">
    <molecule id="P11161-1"/>
    <property type="nucleotide sequence ID" value="NM_000399.4"/>
</dbReference>
<dbReference type="RefSeq" id="NP_001129649.1">
    <molecule id="P11161-1"/>
    <property type="nucleotide sequence ID" value="NM_001136177.3"/>
</dbReference>
<dbReference type="RefSeq" id="NP_001129650.1">
    <molecule id="P11161-1"/>
    <property type="nucleotide sequence ID" value="NM_001136178.2"/>
</dbReference>
<dbReference type="RefSeq" id="NP_001129651.1">
    <molecule id="P11161-2"/>
    <property type="nucleotide sequence ID" value="NM_001136179.3"/>
</dbReference>
<dbReference type="RefSeq" id="NP_001307966.1">
    <molecule id="P11161-2"/>
    <property type="nucleotide sequence ID" value="NM_001321037.2"/>
</dbReference>
<dbReference type="RefSeq" id="XP_054220940.1">
    <molecule id="P11161-2"/>
    <property type="nucleotide sequence ID" value="XM_054364965.1"/>
</dbReference>
<dbReference type="SMR" id="P11161"/>
<dbReference type="BioGRID" id="108279">
    <property type="interactions" value="164"/>
</dbReference>
<dbReference type="FunCoup" id="P11161">
    <property type="interactions" value="2091"/>
</dbReference>
<dbReference type="IntAct" id="P11161">
    <property type="interactions" value="12"/>
</dbReference>
<dbReference type="MINT" id="P11161"/>
<dbReference type="STRING" id="9606.ENSP00000242480"/>
<dbReference type="GlyCosmos" id="P11161">
    <property type="glycosylation" value="13 sites, 2 glycans"/>
</dbReference>
<dbReference type="GlyGen" id="P11161">
    <property type="glycosylation" value="14 sites, 1 N-linked glycan (1 site), 2 O-linked glycans (13 sites)"/>
</dbReference>
<dbReference type="iPTMnet" id="P11161"/>
<dbReference type="PhosphoSitePlus" id="P11161"/>
<dbReference type="BioMuta" id="EGR2"/>
<dbReference type="DMDM" id="33112654"/>
<dbReference type="MassIVE" id="P11161"/>
<dbReference type="PaxDb" id="9606-ENSP00000242480"/>
<dbReference type="PeptideAtlas" id="P11161"/>
<dbReference type="ProteomicsDB" id="52701">
    <molecule id="P11161-1"/>
</dbReference>
<dbReference type="ProteomicsDB" id="52702">
    <molecule id="P11161-2"/>
</dbReference>
<dbReference type="Antibodypedia" id="14464">
    <property type="antibodies" value="538 antibodies from 42 providers"/>
</dbReference>
<dbReference type="DNASU" id="1959"/>
<dbReference type="Ensembl" id="ENST00000242480.4">
    <molecule id="P11161-1"/>
    <property type="protein sequence ID" value="ENSP00000242480.3"/>
    <property type="gene ID" value="ENSG00000122877.18"/>
</dbReference>
<dbReference type="Ensembl" id="ENST00000411732.4">
    <molecule id="P11161-2"/>
    <property type="protein sequence ID" value="ENSP00000387634.1"/>
    <property type="gene ID" value="ENSG00000122877.18"/>
</dbReference>
<dbReference type="Ensembl" id="ENST00000637191.2">
    <molecule id="P11161-1"/>
    <property type="protein sequence ID" value="ENSP00000490154.2"/>
    <property type="gene ID" value="ENSG00000122877.18"/>
</dbReference>
<dbReference type="GeneID" id="1959"/>
<dbReference type="KEGG" id="hsa:1959"/>
<dbReference type="MANE-Select" id="ENST00000242480.4">
    <property type="protein sequence ID" value="ENSP00000242480.3"/>
    <property type="RefSeq nucleotide sequence ID" value="NM_000399.5"/>
    <property type="RefSeq protein sequence ID" value="NP_000390.2"/>
</dbReference>
<dbReference type="UCSC" id="uc001jmi.4">
    <molecule id="P11161-1"/>
    <property type="organism name" value="human"/>
</dbReference>
<dbReference type="AGR" id="HGNC:3239"/>
<dbReference type="CTD" id="1959"/>
<dbReference type="DisGeNET" id="1959"/>
<dbReference type="GeneCards" id="EGR2"/>
<dbReference type="GeneReviews" id="EGR2"/>
<dbReference type="HGNC" id="HGNC:3239">
    <property type="gene designation" value="EGR2"/>
</dbReference>
<dbReference type="HPA" id="ENSG00000122877">
    <property type="expression patterns" value="Tissue enhanced (epididymis, thyroid gland)"/>
</dbReference>
<dbReference type="MalaCards" id="EGR2"/>
<dbReference type="MIM" id="129010">
    <property type="type" value="gene"/>
</dbReference>
<dbReference type="MIM" id="145900">
    <property type="type" value="phenotype"/>
</dbReference>
<dbReference type="MIM" id="605253">
    <property type="type" value="phenotype"/>
</dbReference>
<dbReference type="MIM" id="607678">
    <property type="type" value="phenotype"/>
</dbReference>
<dbReference type="neXtProt" id="NX_P11161"/>
<dbReference type="OpenTargets" id="ENSG00000122877"/>
<dbReference type="Orphanet" id="101084">
    <property type="disease" value="Charcot-Marie-Tooth disease type 1D"/>
</dbReference>
<dbReference type="Orphanet" id="99951">
    <property type="disease" value="Charcot-Marie-Tooth disease type 4E"/>
</dbReference>
<dbReference type="Orphanet" id="64748">
    <property type="disease" value="Dejerine-Sottas syndrome"/>
</dbReference>
<dbReference type="PharmGKB" id="PA27674"/>
<dbReference type="VEuPathDB" id="HostDB:ENSG00000122877"/>
<dbReference type="eggNOG" id="KOG1721">
    <property type="taxonomic scope" value="Eukaryota"/>
</dbReference>
<dbReference type="GeneTree" id="ENSGT00940000158394"/>
<dbReference type="HOGENOM" id="CLU_043235_0_0_1"/>
<dbReference type="InParanoid" id="P11161"/>
<dbReference type="OMA" id="QCQRELH"/>
<dbReference type="OrthoDB" id="8197458at2759"/>
<dbReference type="PAN-GO" id="P11161">
    <property type="GO annotations" value="3 GO annotations based on evolutionary models"/>
</dbReference>
<dbReference type="PhylomeDB" id="P11161"/>
<dbReference type="TreeFam" id="TF318980"/>
<dbReference type="PathwayCommons" id="P11161"/>
<dbReference type="Reactome" id="R-HSA-381340">
    <property type="pathway name" value="Transcriptional regulation of white adipocyte differentiation"/>
</dbReference>
<dbReference type="Reactome" id="R-HSA-5617472">
    <property type="pathway name" value="Activation of anterior HOX genes in hindbrain development during early embryogenesis"/>
</dbReference>
<dbReference type="Reactome" id="R-HSA-9031628">
    <property type="pathway name" value="NGF-stimulated transcription"/>
</dbReference>
<dbReference type="Reactome" id="R-HSA-9619665">
    <property type="pathway name" value="EGR2 and SOX10-mediated initiation of Schwann cell myelination"/>
</dbReference>
<dbReference type="SignaLink" id="P11161"/>
<dbReference type="SIGNOR" id="P11161"/>
<dbReference type="UniPathway" id="UPA00886"/>
<dbReference type="BioGRID-ORCS" id="1959">
    <property type="hits" value="230 hits in 1165 CRISPR screens"/>
</dbReference>
<dbReference type="GeneWiki" id="EGR2"/>
<dbReference type="GenomeRNAi" id="1959"/>
<dbReference type="Pharos" id="P11161">
    <property type="development level" value="Tbio"/>
</dbReference>
<dbReference type="PRO" id="PR:P11161"/>
<dbReference type="Proteomes" id="UP000005640">
    <property type="component" value="Chromosome 10"/>
</dbReference>
<dbReference type="RNAct" id="P11161">
    <property type="molecule type" value="protein"/>
</dbReference>
<dbReference type="Bgee" id="ENSG00000122877">
    <property type="expression patterns" value="Expressed in gall bladder and 109 other cell types or tissues"/>
</dbReference>
<dbReference type="ExpressionAtlas" id="P11161">
    <property type="expression patterns" value="baseline and differential"/>
</dbReference>
<dbReference type="GO" id="GO:0000785">
    <property type="term" value="C:chromatin"/>
    <property type="evidence" value="ECO:0000247"/>
    <property type="project" value="NTNU_SB"/>
</dbReference>
<dbReference type="GO" id="GO:0005737">
    <property type="term" value="C:cytoplasm"/>
    <property type="evidence" value="ECO:0000250"/>
    <property type="project" value="UniProtKB"/>
</dbReference>
<dbReference type="GO" id="GO:0043231">
    <property type="term" value="C:intracellular membrane-bounded organelle"/>
    <property type="evidence" value="ECO:0000314"/>
    <property type="project" value="HPA"/>
</dbReference>
<dbReference type="GO" id="GO:0005654">
    <property type="term" value="C:nucleoplasm"/>
    <property type="evidence" value="ECO:0000314"/>
    <property type="project" value="HPA"/>
</dbReference>
<dbReference type="GO" id="GO:0005634">
    <property type="term" value="C:nucleus"/>
    <property type="evidence" value="ECO:0000250"/>
    <property type="project" value="UniProtKB"/>
</dbReference>
<dbReference type="GO" id="GO:0003682">
    <property type="term" value="F:chromatin binding"/>
    <property type="evidence" value="ECO:0000250"/>
    <property type="project" value="UniProtKB"/>
</dbReference>
<dbReference type="GO" id="GO:0001228">
    <property type="term" value="F:DNA-binding transcription activator activity, RNA polymerase II-specific"/>
    <property type="evidence" value="ECO:0000314"/>
    <property type="project" value="NTNU_SB"/>
</dbReference>
<dbReference type="GO" id="GO:0003700">
    <property type="term" value="F:DNA-binding transcription factor activity"/>
    <property type="evidence" value="ECO:0000314"/>
    <property type="project" value="UniProtKB"/>
</dbReference>
<dbReference type="GO" id="GO:0000981">
    <property type="term" value="F:DNA-binding transcription factor activity, RNA polymerase II-specific"/>
    <property type="evidence" value="ECO:0000314"/>
    <property type="project" value="UniProtKB"/>
</dbReference>
<dbReference type="GO" id="GO:0000978">
    <property type="term" value="F:RNA polymerase II cis-regulatory region sequence-specific DNA binding"/>
    <property type="evidence" value="ECO:0000314"/>
    <property type="project" value="NTNU_SB"/>
</dbReference>
<dbReference type="GO" id="GO:0061629">
    <property type="term" value="F:RNA polymerase II-specific DNA-binding transcription factor binding"/>
    <property type="evidence" value="ECO:0000250"/>
    <property type="project" value="BHF-UCL"/>
</dbReference>
<dbReference type="GO" id="GO:0043565">
    <property type="term" value="F:sequence-specific DNA binding"/>
    <property type="evidence" value="ECO:0000314"/>
    <property type="project" value="UniProtKB"/>
</dbReference>
<dbReference type="GO" id="GO:1990837">
    <property type="term" value="F:sequence-specific double-stranded DNA binding"/>
    <property type="evidence" value="ECO:0000314"/>
    <property type="project" value="ARUK-UCL"/>
</dbReference>
<dbReference type="GO" id="GO:0061665">
    <property type="term" value="F:SUMO ligase activity"/>
    <property type="evidence" value="ECO:0000250"/>
    <property type="project" value="ARUK-UCL"/>
</dbReference>
<dbReference type="GO" id="GO:0000976">
    <property type="term" value="F:transcription cis-regulatory region binding"/>
    <property type="evidence" value="ECO:0000250"/>
    <property type="project" value="UniProtKB"/>
</dbReference>
<dbReference type="GO" id="GO:0031625">
    <property type="term" value="F:ubiquitin protein ligase binding"/>
    <property type="evidence" value="ECO:0000353"/>
    <property type="project" value="UniProtKB"/>
</dbReference>
<dbReference type="GO" id="GO:0008270">
    <property type="term" value="F:zinc ion binding"/>
    <property type="evidence" value="ECO:0007669"/>
    <property type="project" value="UniProtKB-KW"/>
</dbReference>
<dbReference type="GO" id="GO:0035904">
    <property type="term" value="P:aorta development"/>
    <property type="evidence" value="ECO:0007669"/>
    <property type="project" value="Ensembl"/>
</dbReference>
<dbReference type="GO" id="GO:0007420">
    <property type="term" value="P:brain development"/>
    <property type="evidence" value="ECO:0000304"/>
    <property type="project" value="ProtInc"/>
</dbReference>
<dbReference type="GO" id="GO:0035284">
    <property type="term" value="P:brain segmentation"/>
    <property type="evidence" value="ECO:0007669"/>
    <property type="project" value="Ensembl"/>
</dbReference>
<dbReference type="GO" id="GO:0021612">
    <property type="term" value="P:facial nerve structural organization"/>
    <property type="evidence" value="ECO:0000250"/>
    <property type="project" value="UniProtKB"/>
</dbReference>
<dbReference type="GO" id="GO:0045444">
    <property type="term" value="P:fat cell differentiation"/>
    <property type="evidence" value="ECO:0000250"/>
    <property type="project" value="BHF-UCL"/>
</dbReference>
<dbReference type="GO" id="GO:0010467">
    <property type="term" value="P:gene expression"/>
    <property type="evidence" value="ECO:0007669"/>
    <property type="project" value="Ensembl"/>
</dbReference>
<dbReference type="GO" id="GO:0008045">
    <property type="term" value="P:motor neuron axon guidance"/>
    <property type="evidence" value="ECO:0007669"/>
    <property type="project" value="Ensembl"/>
</dbReference>
<dbReference type="GO" id="GO:0042552">
    <property type="term" value="P:myelination"/>
    <property type="evidence" value="ECO:0007669"/>
    <property type="project" value="Ensembl"/>
</dbReference>
<dbReference type="GO" id="GO:0007422">
    <property type="term" value="P:peripheral nervous system development"/>
    <property type="evidence" value="ECO:0000304"/>
    <property type="project" value="ProtInc"/>
</dbReference>
<dbReference type="GO" id="GO:0045893">
    <property type="term" value="P:positive regulation of DNA-templated transcription"/>
    <property type="evidence" value="ECO:0000250"/>
    <property type="project" value="UniProtKB"/>
</dbReference>
<dbReference type="GO" id="GO:0031643">
    <property type="term" value="P:positive regulation of myelination"/>
    <property type="evidence" value="ECO:0000250"/>
    <property type="project" value="UniProtKB"/>
</dbReference>
<dbReference type="GO" id="GO:0014040">
    <property type="term" value="P:positive regulation of Schwann cell differentiation"/>
    <property type="evidence" value="ECO:0000250"/>
    <property type="project" value="UniProtKB"/>
</dbReference>
<dbReference type="GO" id="GO:0045944">
    <property type="term" value="P:positive regulation of transcription by RNA polymerase II"/>
    <property type="evidence" value="ECO:0000314"/>
    <property type="project" value="UniProtKB"/>
</dbReference>
<dbReference type="GO" id="GO:0006611">
    <property type="term" value="P:protein export from nucleus"/>
    <property type="evidence" value="ECO:0000250"/>
    <property type="project" value="UniProtKB"/>
</dbReference>
<dbReference type="GO" id="GO:0016925">
    <property type="term" value="P:protein sumoylation"/>
    <property type="evidence" value="ECO:0000250"/>
    <property type="project" value="ARUK-UCL"/>
</dbReference>
<dbReference type="GO" id="GO:0030278">
    <property type="term" value="P:regulation of ossification"/>
    <property type="evidence" value="ECO:0007669"/>
    <property type="project" value="Ensembl"/>
</dbReference>
<dbReference type="GO" id="GO:0006357">
    <property type="term" value="P:regulation of transcription by RNA polymerase II"/>
    <property type="evidence" value="ECO:0000318"/>
    <property type="project" value="GO_Central"/>
</dbReference>
<dbReference type="GO" id="GO:0021660">
    <property type="term" value="P:rhombomere 3 formation"/>
    <property type="evidence" value="ECO:0007669"/>
    <property type="project" value="Ensembl"/>
</dbReference>
<dbReference type="GO" id="GO:0021659">
    <property type="term" value="P:rhombomere 3 structural organization"/>
    <property type="evidence" value="ECO:0000250"/>
    <property type="project" value="UniProtKB"/>
</dbReference>
<dbReference type="GO" id="GO:0021666">
    <property type="term" value="P:rhombomere 5 formation"/>
    <property type="evidence" value="ECO:0007669"/>
    <property type="project" value="Ensembl"/>
</dbReference>
<dbReference type="GO" id="GO:0021665">
    <property type="term" value="P:rhombomere 5 structural organization"/>
    <property type="evidence" value="ECO:0000250"/>
    <property type="project" value="UniProtKB"/>
</dbReference>
<dbReference type="GO" id="GO:0007622">
    <property type="term" value="P:rhythmic behavior"/>
    <property type="evidence" value="ECO:0007669"/>
    <property type="project" value="Ensembl"/>
</dbReference>
<dbReference type="GO" id="GO:0014037">
    <property type="term" value="P:Schwann cell differentiation"/>
    <property type="evidence" value="ECO:0000250"/>
    <property type="project" value="UniProtKB"/>
</dbReference>
<dbReference type="GO" id="GO:0035914">
    <property type="term" value="P:skeletal muscle cell differentiation"/>
    <property type="evidence" value="ECO:0000250"/>
    <property type="project" value="UniProtKB"/>
</dbReference>
<dbReference type="FunFam" id="3.30.160.60:FF:000837">
    <property type="entry name" value="E3 SUMO-protein ligase EGR2 isoform X1"/>
    <property type="match status" value="1"/>
</dbReference>
<dbReference type="FunFam" id="3.30.160.60:FF:000324">
    <property type="entry name" value="Early growth response protein 4"/>
    <property type="match status" value="1"/>
</dbReference>
<dbReference type="FunFam" id="3.30.160.60:FF:000419">
    <property type="entry name" value="Early growth response protein 4"/>
    <property type="match status" value="1"/>
</dbReference>
<dbReference type="Gene3D" id="3.30.160.60">
    <property type="entry name" value="Classic Zinc Finger"/>
    <property type="match status" value="3"/>
</dbReference>
<dbReference type="InterPro" id="IPR021849">
    <property type="entry name" value="EGR_N"/>
</dbReference>
<dbReference type="InterPro" id="IPR036236">
    <property type="entry name" value="Znf_C2H2_sf"/>
</dbReference>
<dbReference type="InterPro" id="IPR013087">
    <property type="entry name" value="Znf_C2H2_type"/>
</dbReference>
<dbReference type="PANTHER" id="PTHR23235:SF54">
    <property type="entry name" value="E3 SUMO-PROTEIN LIGASE EGR2"/>
    <property type="match status" value="1"/>
</dbReference>
<dbReference type="PANTHER" id="PTHR23235">
    <property type="entry name" value="KRUEPPEL-LIKE TRANSCRIPTION FACTOR"/>
    <property type="match status" value="1"/>
</dbReference>
<dbReference type="Pfam" id="PF11928">
    <property type="entry name" value="DUF3446"/>
    <property type="match status" value="1"/>
</dbReference>
<dbReference type="Pfam" id="PF00096">
    <property type="entry name" value="zf-C2H2"/>
    <property type="match status" value="3"/>
</dbReference>
<dbReference type="SMART" id="SM00355">
    <property type="entry name" value="ZnF_C2H2"/>
    <property type="match status" value="3"/>
</dbReference>
<dbReference type="SUPFAM" id="SSF57667">
    <property type="entry name" value="beta-beta-alpha zinc fingers"/>
    <property type="match status" value="2"/>
</dbReference>
<dbReference type="PROSITE" id="PS00028">
    <property type="entry name" value="ZINC_FINGER_C2H2_1"/>
    <property type="match status" value="3"/>
</dbReference>
<dbReference type="PROSITE" id="PS50157">
    <property type="entry name" value="ZINC_FINGER_C2H2_2"/>
    <property type="match status" value="3"/>
</dbReference>
<proteinExistence type="evidence at protein level"/>
<name>EGR2_HUMAN</name>
<comment type="function">
    <text evidence="1 12">Sequence-specific DNA-binding transcription factor (PubMed:17717711). Plays a role in hindbrain segmentation by regulating the expression of a subset of homeobox containing genes and in Schwann cell myelination by regulating the expression of genes involved in the formation and maintenance of myelin (By similarity). Binds to two EGR2-consensus sites EGR2A (5'-CTGTAGGAG-3') and EGR2B (5'-ATGTAGGTG-3') in the HOXB3 enhancer and promotes HOXB3 transcriptional activation (By similarity). Binds to specific DNA sites located in the promoter region of HOXA4, HOXB2 and ERBB2 (By similarity). Regulates hindbrain segmentation by controlling the expression of Hox genes, such as HOXA4, HOXB3 and HOXB2, and thereby specifying odd and even rhombomeres (By similarity). Promotes the expression of HOXB3 in the rhombomere r5 in the hindbrain (By similarity). Regulates myelination in the peripheral nervous system after birth, possibly by regulating the expression of myelin proteins, such as MPZ, and by promoting the differentiation of Schwann cells (By similarity). Involved in the development of the jaw openener musculature, probably by playing a role in its innervation through trigeminal motor neurons (By similarity). May play a role in adipogenesis, possibly by regulating the expression of CEBPB (By similarity).</text>
</comment>
<comment type="function">
    <text evidence="14">E3 SUMO-protein ligase helping SUMO1 conjugation to its coregulators NAB1 and NAB2, whose sumoylation down-regulates EGR2 transcriptional activity.</text>
</comment>
<comment type="pathway">
    <text>Protein modification; protein sumoylation.</text>
</comment>
<comment type="subunit">
    <text evidence="1 9 13 14">Interacts with HCFC1 (PubMed:14532282). Interacts with WWP2 (PubMed:19651900). Interacts with UBC9 (PubMed:21836637). Interacts with CITED1 (By similarity). Interacts (via phosphorylated form) with SFN (By similarity).</text>
</comment>
<comment type="subcellular location">
    <subcellularLocation>
        <location evidence="1">Nucleus</location>
    </subcellularLocation>
</comment>
<comment type="alternative products">
    <event type="alternative splicing"/>
    <isoform>
        <id>P11161-1</id>
        <name>Long</name>
        <sequence type="displayed"/>
    </isoform>
    <isoform>
        <id>P11161-2</id>
        <name>Short</name>
        <sequence type="described" ref="VSP_006863"/>
    </isoform>
</comment>
<comment type="PTM">
    <text evidence="1">Ubiquitinated by WWP2 leading to proteasomal degradation.</text>
</comment>
<comment type="PTM">
    <text evidence="1">Acetylated at Lys-247. May be deacetylated by HDAC6, HDAC10 or SIRT1.</text>
</comment>
<comment type="disease" evidence="12 15 20">
    <disease id="DI-00358">
        <name>Neuropathy, congenital hypomyelinating, 1, autosomal recessive</name>
        <acronym>CHN1</acronym>
        <description>A severe degenerating neuropathy that results from a congenital impairment in myelin formation. It is clinically characterized by early onset of hypotonia, areflexia, distal muscle weakness, and very slow nerve conduction velocities (as low as 3m/s). Some patients manifest nearly complete absence of spontaneous limb movements, respiratory distress at birth, and complete absence of myelin shown by electron microscopy of peripheral nerves.</description>
        <dbReference type="MIM" id="605253"/>
    </disease>
    <text evidence="15">The disease is caused by variants affecting the gene represented in this entry. Patients affected by the amyelinating form carry a causative, homozygous deletion encompassing a myelin-specific enhancer of EGR2 (PubMed:22522483).</text>
</comment>
<comment type="disease" evidence="5 6 7 8 10 11 12 16 17 18 20 21">
    <disease id="DI-00271">
        <name>Charcot-Marie-Tooth disease, demyelinating, type 1D</name>
        <acronym>CMT1D</acronym>
        <description>A dominant demyelinating form of Charcot-Marie-Tooth disease, a disorder of the peripheral nervous system, characterized by progressive weakness and atrophy, initially of the peroneal muscles and later of the distal muscles of the arms. Charcot-Marie-Tooth disease is classified in two main groups on the basis of electrophysiologic properties and histopathology: primary peripheral demyelinating neuropathies (designated CMT1 when they are dominantly inherited) and primary peripheral axonal neuropathies (CMT2). Demyelinating neuropathies are characterized by severely reduced nerve conduction velocities (less than 38 m/sec), segmental demyelination and remyelination with onion bulb formations on nerve biopsy, slowly progressive distal muscle atrophy and weakness, absent deep tendon reflexes, and hollow feet.</description>
        <dbReference type="MIM" id="607678"/>
    </disease>
    <text>The disease is caused by variants affecting the gene represented in this entry.</text>
</comment>
<comment type="disease" evidence="4 12 19">
    <disease id="DI-00387">
        <name>Dejerine-Sottas syndrome</name>
        <acronym>DSS</acronym>
        <description>A severe degenerating neuropathy of the demyelinating Charcot-Marie-Tooth disease category, with onset by age 2 years. Characterized by motor and sensory neuropathy with very slow nerve conduction velocities, increased cerebrospinal fluid protein concentrations, hypertrophic nerve changes, delayed age of walking as well as areflexia. There are both autosomal dominant and autosomal recessive forms of Dejerine-Sottas syndrome.</description>
        <dbReference type="MIM" id="145900"/>
    </disease>
    <text>The disease is caused by variants affecting the gene represented in this entry.</text>
</comment>
<comment type="similarity">
    <text evidence="23">Belongs to the EGR C2H2-type zinc-finger protein family.</text>
</comment>
<comment type="sequence caution" evidence="23">
    <conflict type="erroneous initiation">
        <sequence resource="EMBL-CDS" id="AAA52372"/>
    </conflict>
    <text>Truncated N-terminus.</text>
</comment>
<comment type="sequence caution" evidence="23">
    <conflict type="frameshift">
        <sequence resource="EMBL-CDS" id="AAA52372"/>
    </conflict>
</comment>
<comment type="online information" name="Inherited peripheral neuropathies mutation db">
    <link uri="https://uantwerpen.vib.be/CMTMutations"/>
</comment>
<gene>
    <name type="primary">EGR2</name>
    <name type="synonym">KROX20</name>
</gene>
<evidence type="ECO:0000250" key="1">
    <source>
        <dbReference type="UniProtKB" id="P08152"/>
    </source>
</evidence>
<evidence type="ECO:0000255" key="2">
    <source>
        <dbReference type="PROSITE-ProRule" id="PRU00042"/>
    </source>
</evidence>
<evidence type="ECO:0000256" key="3">
    <source>
        <dbReference type="SAM" id="MobiDB-lite"/>
    </source>
</evidence>
<evidence type="ECO:0000269" key="4">
    <source>
    </source>
</evidence>
<evidence type="ECO:0000269" key="5">
    <source>
    </source>
</evidence>
<evidence type="ECO:0000269" key="6">
    <source>
    </source>
</evidence>
<evidence type="ECO:0000269" key="7">
    <source>
    </source>
</evidence>
<evidence type="ECO:0000269" key="8">
    <source>
    </source>
</evidence>
<evidence type="ECO:0000269" key="9">
    <source>
    </source>
</evidence>
<evidence type="ECO:0000269" key="10">
    <source>
    </source>
</evidence>
<evidence type="ECO:0000269" key="11">
    <source>
    </source>
</evidence>
<evidence type="ECO:0000269" key="12">
    <source>
    </source>
</evidence>
<evidence type="ECO:0000269" key="13">
    <source>
    </source>
</evidence>
<evidence type="ECO:0000269" key="14">
    <source>
    </source>
</evidence>
<evidence type="ECO:0000269" key="15">
    <source>
    </source>
</evidence>
<evidence type="ECO:0000269" key="16">
    <source>
    </source>
</evidence>
<evidence type="ECO:0000269" key="17">
    <source>
    </source>
</evidence>
<evidence type="ECO:0000269" key="18">
    <source>
    </source>
</evidence>
<evidence type="ECO:0000269" key="19">
    <source>
    </source>
</evidence>
<evidence type="ECO:0000269" key="20">
    <source>
    </source>
</evidence>
<evidence type="ECO:0000269" key="21">
    <source ref="14"/>
</evidence>
<evidence type="ECO:0000303" key="22">
    <source>
    </source>
</evidence>
<evidence type="ECO:0000305" key="23"/>
<accession>P11161</accession>
<accession>B2R724</accession>
<accession>B3KRD7</accession>
<accession>Q68CZ5</accession>
<accession>Q8IV26</accession>
<accession>Q9UNA6</accession>
<reference key="1">
    <citation type="journal article" date="1988" name="Proc. Natl. Acad. Sci. U.S.A.">
        <title>Molecular cloning, sequencing, and mapping of EGR2, a human early growth response gene encoding a protein with 'zinc-binding finger' structure.</title>
        <authorList>
            <person name="Joseph L.J."/>
            <person name="le Beau M.M."/>
            <person name="Jamieson G.A. Jr."/>
            <person name="Acharya S."/>
            <person name="Shows T.B."/>
            <person name="Rowley J.D."/>
            <person name="Sukhatme V.P."/>
        </authorList>
    </citation>
    <scope>NUCLEOTIDE SEQUENCE [MRNA] (ISOFORM LONG)</scope>
</reference>
<reference key="2">
    <citation type="journal article" date="1989" name="Proc. Natl. Acad. Sci. U.S.A.">
        <authorList>
            <person name="Joseph L.J."/>
            <person name="le Beau M.M."/>
            <person name="Jamieson G.A. Jr."/>
            <person name="Acharya S."/>
            <person name="Shows T.B."/>
            <person name="Rowley J.D."/>
            <person name="Sukhatme V.P."/>
        </authorList>
    </citation>
    <scope>ERRATUM OF PUBMED:3140236</scope>
    <scope>SEQUENCE REVISION TO C-TERMINUS</scope>
</reference>
<reference key="3">
    <citation type="journal article" date="1998" name="Nat. Genet.">
        <title>Mutations in the early growth response 2 (EGR2) gene are associated with hereditary myelinopathies.</title>
        <authorList>
            <person name="Warner L.E."/>
            <person name="Mancias P."/>
            <person name="Butler I.J."/>
            <person name="McDonald C.M."/>
            <person name="Keppen L."/>
            <person name="Koob K.G."/>
            <person name="Lupski J.R."/>
        </authorList>
    </citation>
    <scope>NUCLEOTIDE SEQUENCE [MRNA] (ISOFORM LONG)</scope>
    <scope>VARIANTS CHN1 ASN-268 AND 382-SER-ASP-383 DELINS ARG-TYR</scope>
    <scope>VARIANT CMT1D TRP-409</scope>
</reference>
<reference key="4">
    <citation type="journal article" date="2004" name="Nat. Genet.">
        <title>Complete sequencing and characterization of 21,243 full-length human cDNAs.</title>
        <authorList>
            <person name="Ota T."/>
            <person name="Suzuki Y."/>
            <person name="Nishikawa T."/>
            <person name="Otsuki T."/>
            <person name="Sugiyama T."/>
            <person name="Irie R."/>
            <person name="Wakamatsu A."/>
            <person name="Hayashi K."/>
            <person name="Sato H."/>
            <person name="Nagai K."/>
            <person name="Kimura K."/>
            <person name="Makita H."/>
            <person name="Sekine M."/>
            <person name="Obayashi M."/>
            <person name="Nishi T."/>
            <person name="Shibahara T."/>
            <person name="Tanaka T."/>
            <person name="Ishii S."/>
            <person name="Yamamoto J."/>
            <person name="Saito K."/>
            <person name="Kawai Y."/>
            <person name="Isono Y."/>
            <person name="Nakamura Y."/>
            <person name="Nagahari K."/>
            <person name="Murakami K."/>
            <person name="Yasuda T."/>
            <person name="Iwayanagi T."/>
            <person name="Wagatsuma M."/>
            <person name="Shiratori A."/>
            <person name="Sudo H."/>
            <person name="Hosoiri T."/>
            <person name="Kaku Y."/>
            <person name="Kodaira H."/>
            <person name="Kondo H."/>
            <person name="Sugawara M."/>
            <person name="Takahashi M."/>
            <person name="Kanda K."/>
            <person name="Yokoi T."/>
            <person name="Furuya T."/>
            <person name="Kikkawa E."/>
            <person name="Omura Y."/>
            <person name="Abe K."/>
            <person name="Kamihara K."/>
            <person name="Katsuta N."/>
            <person name="Sato K."/>
            <person name="Tanikawa M."/>
            <person name="Yamazaki M."/>
            <person name="Ninomiya K."/>
            <person name="Ishibashi T."/>
            <person name="Yamashita H."/>
            <person name="Murakawa K."/>
            <person name="Fujimori K."/>
            <person name="Tanai H."/>
            <person name="Kimata M."/>
            <person name="Watanabe M."/>
            <person name="Hiraoka S."/>
            <person name="Chiba Y."/>
            <person name="Ishida S."/>
            <person name="Ono Y."/>
            <person name="Takiguchi S."/>
            <person name="Watanabe S."/>
            <person name="Yosida M."/>
            <person name="Hotuta T."/>
            <person name="Kusano J."/>
            <person name="Kanehori K."/>
            <person name="Takahashi-Fujii A."/>
            <person name="Hara H."/>
            <person name="Tanase T.-O."/>
            <person name="Nomura Y."/>
            <person name="Togiya S."/>
            <person name="Komai F."/>
            <person name="Hara R."/>
            <person name="Takeuchi K."/>
            <person name="Arita M."/>
            <person name="Imose N."/>
            <person name="Musashino K."/>
            <person name="Yuuki H."/>
            <person name="Oshima A."/>
            <person name="Sasaki N."/>
            <person name="Aotsuka S."/>
            <person name="Yoshikawa Y."/>
            <person name="Matsunawa H."/>
            <person name="Ichihara T."/>
            <person name="Shiohata N."/>
            <person name="Sano S."/>
            <person name="Moriya S."/>
            <person name="Momiyama H."/>
            <person name="Satoh N."/>
            <person name="Takami S."/>
            <person name="Terashima Y."/>
            <person name="Suzuki O."/>
            <person name="Nakagawa S."/>
            <person name="Senoh A."/>
            <person name="Mizoguchi H."/>
            <person name="Goto Y."/>
            <person name="Shimizu F."/>
            <person name="Wakebe H."/>
            <person name="Hishigaki H."/>
            <person name="Watanabe T."/>
            <person name="Sugiyama A."/>
            <person name="Takemoto M."/>
            <person name="Kawakami B."/>
            <person name="Yamazaki M."/>
            <person name="Watanabe K."/>
            <person name="Kumagai A."/>
            <person name="Itakura S."/>
            <person name="Fukuzumi Y."/>
            <person name="Fujimori Y."/>
            <person name="Komiyama M."/>
            <person name="Tashiro H."/>
            <person name="Tanigami A."/>
            <person name="Fujiwara T."/>
            <person name="Ono T."/>
            <person name="Yamada K."/>
            <person name="Fujii Y."/>
            <person name="Ozaki K."/>
            <person name="Hirao M."/>
            <person name="Ohmori Y."/>
            <person name="Kawabata A."/>
            <person name="Hikiji T."/>
            <person name="Kobatake N."/>
            <person name="Inagaki H."/>
            <person name="Ikema Y."/>
            <person name="Okamoto S."/>
            <person name="Okitani R."/>
            <person name="Kawakami T."/>
            <person name="Noguchi S."/>
            <person name="Itoh T."/>
            <person name="Shigeta K."/>
            <person name="Senba T."/>
            <person name="Matsumura K."/>
            <person name="Nakajima Y."/>
            <person name="Mizuno T."/>
            <person name="Morinaga M."/>
            <person name="Sasaki M."/>
            <person name="Togashi T."/>
            <person name="Oyama M."/>
            <person name="Hata H."/>
            <person name="Watanabe M."/>
            <person name="Komatsu T."/>
            <person name="Mizushima-Sugano J."/>
            <person name="Satoh T."/>
            <person name="Shirai Y."/>
            <person name="Takahashi Y."/>
            <person name="Nakagawa K."/>
            <person name="Okumura K."/>
            <person name="Nagase T."/>
            <person name="Nomura N."/>
            <person name="Kikuchi H."/>
            <person name="Masuho Y."/>
            <person name="Yamashita R."/>
            <person name="Nakai K."/>
            <person name="Yada T."/>
            <person name="Nakamura Y."/>
            <person name="Ohara O."/>
            <person name="Isogai T."/>
            <person name="Sugano S."/>
        </authorList>
    </citation>
    <scope>NUCLEOTIDE SEQUENCE [LARGE SCALE MRNA] (ISOFORMS LONG AND SHORT)</scope>
    <source>
        <tissue>Brain</tissue>
        <tissue>Testis</tissue>
    </source>
</reference>
<reference key="5">
    <citation type="journal article" date="2007" name="BMC Genomics">
        <title>The full-ORF clone resource of the German cDNA consortium.</title>
        <authorList>
            <person name="Bechtel S."/>
            <person name="Rosenfelder H."/>
            <person name="Duda A."/>
            <person name="Schmidt C.P."/>
            <person name="Ernst U."/>
            <person name="Wellenreuther R."/>
            <person name="Mehrle A."/>
            <person name="Schuster C."/>
            <person name="Bahr A."/>
            <person name="Bloecker H."/>
            <person name="Heubner D."/>
            <person name="Hoerlein A."/>
            <person name="Michel G."/>
            <person name="Wedler H."/>
            <person name="Koehrer K."/>
            <person name="Ottenwaelder B."/>
            <person name="Poustka A."/>
            <person name="Wiemann S."/>
            <person name="Schupp I."/>
        </authorList>
    </citation>
    <scope>NUCLEOTIDE SEQUENCE [LARGE SCALE MRNA]</scope>
    <source>
        <tissue>Endometrium</tissue>
    </source>
</reference>
<reference key="6">
    <citation type="journal article" date="2004" name="Nature">
        <title>The DNA sequence and comparative analysis of human chromosome 10.</title>
        <authorList>
            <person name="Deloukas P."/>
            <person name="Earthrowl M.E."/>
            <person name="Grafham D.V."/>
            <person name="Rubenfield M."/>
            <person name="French L."/>
            <person name="Steward C.A."/>
            <person name="Sims S.K."/>
            <person name="Jones M.C."/>
            <person name="Searle S."/>
            <person name="Scott C."/>
            <person name="Howe K."/>
            <person name="Hunt S.E."/>
            <person name="Andrews T.D."/>
            <person name="Gilbert J.G.R."/>
            <person name="Swarbreck D."/>
            <person name="Ashurst J.L."/>
            <person name="Taylor A."/>
            <person name="Battles J."/>
            <person name="Bird C.P."/>
            <person name="Ainscough R."/>
            <person name="Almeida J.P."/>
            <person name="Ashwell R.I.S."/>
            <person name="Ambrose K.D."/>
            <person name="Babbage A.K."/>
            <person name="Bagguley C.L."/>
            <person name="Bailey J."/>
            <person name="Banerjee R."/>
            <person name="Bates K."/>
            <person name="Beasley H."/>
            <person name="Bray-Allen S."/>
            <person name="Brown A.J."/>
            <person name="Brown J.Y."/>
            <person name="Burford D.C."/>
            <person name="Burrill W."/>
            <person name="Burton J."/>
            <person name="Cahill P."/>
            <person name="Camire D."/>
            <person name="Carter N.P."/>
            <person name="Chapman J.C."/>
            <person name="Clark S.Y."/>
            <person name="Clarke G."/>
            <person name="Clee C.M."/>
            <person name="Clegg S."/>
            <person name="Corby N."/>
            <person name="Coulson A."/>
            <person name="Dhami P."/>
            <person name="Dutta I."/>
            <person name="Dunn M."/>
            <person name="Faulkner L."/>
            <person name="Frankish A."/>
            <person name="Frankland J.A."/>
            <person name="Garner P."/>
            <person name="Garnett J."/>
            <person name="Gribble S."/>
            <person name="Griffiths C."/>
            <person name="Grocock R."/>
            <person name="Gustafson E."/>
            <person name="Hammond S."/>
            <person name="Harley J.L."/>
            <person name="Hart E."/>
            <person name="Heath P.D."/>
            <person name="Ho T.P."/>
            <person name="Hopkins B."/>
            <person name="Horne J."/>
            <person name="Howden P.J."/>
            <person name="Huckle E."/>
            <person name="Hynds C."/>
            <person name="Johnson C."/>
            <person name="Johnson D."/>
            <person name="Kana A."/>
            <person name="Kay M."/>
            <person name="Kimberley A.M."/>
            <person name="Kershaw J.K."/>
            <person name="Kokkinaki M."/>
            <person name="Laird G.K."/>
            <person name="Lawlor S."/>
            <person name="Lee H.M."/>
            <person name="Leongamornlert D.A."/>
            <person name="Laird G."/>
            <person name="Lloyd C."/>
            <person name="Lloyd D.M."/>
            <person name="Loveland J."/>
            <person name="Lovell J."/>
            <person name="McLaren S."/>
            <person name="McLay K.E."/>
            <person name="McMurray A."/>
            <person name="Mashreghi-Mohammadi M."/>
            <person name="Matthews L."/>
            <person name="Milne S."/>
            <person name="Nickerson T."/>
            <person name="Nguyen M."/>
            <person name="Overton-Larty E."/>
            <person name="Palmer S.A."/>
            <person name="Pearce A.V."/>
            <person name="Peck A.I."/>
            <person name="Pelan S."/>
            <person name="Phillimore B."/>
            <person name="Porter K."/>
            <person name="Rice C.M."/>
            <person name="Rogosin A."/>
            <person name="Ross M.T."/>
            <person name="Sarafidou T."/>
            <person name="Sehra H.K."/>
            <person name="Shownkeen R."/>
            <person name="Skuce C.D."/>
            <person name="Smith M."/>
            <person name="Standring L."/>
            <person name="Sycamore N."/>
            <person name="Tester J."/>
            <person name="Thorpe A."/>
            <person name="Torcasso W."/>
            <person name="Tracey A."/>
            <person name="Tromans A."/>
            <person name="Tsolas J."/>
            <person name="Wall M."/>
            <person name="Walsh J."/>
            <person name="Wang H."/>
            <person name="Weinstock K."/>
            <person name="West A.P."/>
            <person name="Willey D.L."/>
            <person name="Whitehead S.L."/>
            <person name="Wilming L."/>
            <person name="Wray P.W."/>
            <person name="Young L."/>
            <person name="Chen Y."/>
            <person name="Lovering R.C."/>
            <person name="Moschonas N.K."/>
            <person name="Siebert R."/>
            <person name="Fechtel K."/>
            <person name="Bentley D."/>
            <person name="Durbin R.M."/>
            <person name="Hubbard T."/>
            <person name="Doucette-Stamm L."/>
            <person name="Beck S."/>
            <person name="Smith D.R."/>
            <person name="Rogers J."/>
        </authorList>
    </citation>
    <scope>NUCLEOTIDE SEQUENCE [LARGE SCALE GENOMIC DNA]</scope>
</reference>
<reference key="7">
    <citation type="submission" date="2005-07" db="EMBL/GenBank/DDBJ databases">
        <authorList>
            <person name="Mural R.J."/>
            <person name="Istrail S."/>
            <person name="Sutton G.G."/>
            <person name="Florea L."/>
            <person name="Halpern A.L."/>
            <person name="Mobarry C.M."/>
            <person name="Lippert R."/>
            <person name="Walenz B."/>
            <person name="Shatkay H."/>
            <person name="Dew I."/>
            <person name="Miller J.R."/>
            <person name="Flanigan M.J."/>
            <person name="Edwards N.J."/>
            <person name="Bolanos R."/>
            <person name="Fasulo D."/>
            <person name="Halldorsson B.V."/>
            <person name="Hannenhalli S."/>
            <person name="Turner R."/>
            <person name="Yooseph S."/>
            <person name="Lu F."/>
            <person name="Nusskern D.R."/>
            <person name="Shue B.C."/>
            <person name="Zheng X.H."/>
            <person name="Zhong F."/>
            <person name="Delcher A.L."/>
            <person name="Huson D.H."/>
            <person name="Kravitz S.A."/>
            <person name="Mouchard L."/>
            <person name="Reinert K."/>
            <person name="Remington K.A."/>
            <person name="Clark A.G."/>
            <person name="Waterman M.S."/>
            <person name="Eichler E.E."/>
            <person name="Adams M.D."/>
            <person name="Hunkapiller M.W."/>
            <person name="Myers E.W."/>
            <person name="Venter J.C."/>
        </authorList>
    </citation>
    <scope>NUCLEOTIDE SEQUENCE [LARGE SCALE GENOMIC DNA]</scope>
</reference>
<reference key="8">
    <citation type="journal article" date="2004" name="Genome Res.">
        <title>The status, quality, and expansion of the NIH full-length cDNA project: the Mammalian Gene Collection (MGC).</title>
        <authorList>
            <consortium name="The MGC Project Team"/>
        </authorList>
    </citation>
    <scope>NUCLEOTIDE SEQUENCE [LARGE SCALE MRNA]</scope>
</reference>
<reference key="9">
    <citation type="journal article" date="1990" name="Nucleic Acids Res.">
        <title>The serum and TPA responsive promoter and intron-exon structure of EGR2, a human early growth response gene encoding a zinc finger protein.</title>
        <authorList>
            <person name="Rangnekar V.M."/>
            <person name="Aplin A.C."/>
            <person name="Sukhatme V.P."/>
        </authorList>
    </citation>
    <scope>NUCLEOTIDE SEQUENCE [GENOMIC DNA] OF 1-21</scope>
</reference>
<reference key="10">
    <citation type="journal article" date="2003" name="J. Biol. Chem.">
        <title>HCF-1 functions as a coactivator for the zinc finger protein Krox20.</title>
        <authorList>
            <person name="Luciano R.L."/>
            <person name="Wilson A.C."/>
        </authorList>
    </citation>
    <scope>INTERACTION WITH HCFC1</scope>
    <scope>MUTAGENESIS OF 162-ASP--TYR-165</scope>
</reference>
<reference key="11">
    <citation type="journal article" date="2009" name="Mol. Cell. Biol.">
        <title>The HECT-type E3 ubiquitin ligase AIP2 inhibits activation-induced T-cell death by catalyzing EGR2 ubiquitination.</title>
        <authorList>
            <person name="Chen A."/>
            <person name="Gao B."/>
            <person name="Zhang J."/>
            <person name="McEwen T."/>
            <person name="Ye S.Q."/>
            <person name="Zhang D."/>
            <person name="Fang D."/>
        </authorList>
    </citation>
    <scope>INTERACTION WITH WWP2</scope>
</reference>
<reference key="12">
    <citation type="journal article" date="2009" name="Sci. Signal.">
        <title>Quantitative phosphoproteomic analysis of T cell receptor signaling reveals system-wide modulation of protein-protein interactions.</title>
        <authorList>
            <person name="Mayya V."/>
            <person name="Lundgren D.H."/>
            <person name="Hwang S.-I."/>
            <person name="Rezaul K."/>
            <person name="Wu L."/>
            <person name="Eng J.K."/>
            <person name="Rodionov V."/>
            <person name="Han D.K."/>
        </authorList>
    </citation>
    <scope>IDENTIFICATION BY MASS SPECTROMETRY [LARGE SCALE ANALYSIS]</scope>
    <source>
        <tissue>Leukemic T-cell</tissue>
    </source>
</reference>
<reference key="13">
    <citation type="journal article" date="2011" name="EMBO Rep.">
        <title>The transcription factor Krox20 is an E3 ligase that sumoylates its Nab coregulators.</title>
        <authorList>
            <person name="Garcia-Gutierrez P."/>
            <person name="Juarez-Vicente F."/>
            <person name="Gallardo-Chamizo F."/>
            <person name="Charnay P."/>
            <person name="Garcia-Dominguez M."/>
        </authorList>
    </citation>
    <scope>FUNCTION AS SUMO LIGASE</scope>
    <scope>CATALYTIC ACTIVITY</scope>
    <scope>INTERACTION WITH UBC9</scope>
</reference>
<reference key="14">
    <citation type="journal article" date="1999" name="Eur. J. Hum. Genet. Suppl.">
        <title>EGR2 gene mutation in a patient affected with Charcot-Marie-Tooth type 1.</title>
        <authorList>
            <person name="Di Maria E."/>
            <person name="Bellone E."/>
            <person name="Soriani S."/>
            <person name="Varese A."/>
            <person name="Lamba Doria L."/>
            <person name="Grandis M."/>
            <person name="Schenone A."/>
            <person name="Levi G."/>
            <person name="Ajmar F."/>
            <person name="Mandich P."/>
        </authorList>
    </citation>
    <scope>VARIANT CMT1D VAL-355</scope>
</reference>
<reference key="15">
    <citation type="journal article" date="1999" name="Hum. Mutat.">
        <title>A novel mutation (D305V) in the early growth response 2 gene is associated with severe Charcot-Marie-Tooth type 1 disease.</title>
        <authorList>
            <person name="Bellone E."/>
            <person name="Di Maria E."/>
            <person name="Soriani S."/>
            <person name="Varese A."/>
            <person name="Lamba Doria L."/>
            <person name="Ajmar F."/>
            <person name="Mandich P."/>
        </authorList>
    </citation>
    <scope>VARIANT CMT1D VAL-355</scope>
</reference>
<reference key="16">
    <citation type="journal article" date="1999" name="Neurology">
        <title>Novel missense mutation in the early growth response 2 gene associated with Dejerine-Sottas syndrome phenotype.</title>
        <authorList>
            <person name="Timmerman V."/>
            <person name="De Jonghe P."/>
            <person name="Ceuterick C."/>
            <person name="De Vriendt E."/>
            <person name="Lofgren A."/>
            <person name="Nelis E."/>
            <person name="Warner L.E."/>
            <person name="Lupski J.R."/>
            <person name="Martin J.-J."/>
            <person name="Van Broeckhoven C."/>
        </authorList>
    </citation>
    <scope>VARIANT DSS TRP-359</scope>
</reference>
<reference key="17">
    <citation type="journal article" date="2000" name="Neurology">
        <title>Cranial nerve involvement in CMT disease type 1 due to early growth response 2 gene mutation.</title>
        <authorList>
            <person name="Pareyson D."/>
            <person name="Taroni F."/>
            <person name="Botti S."/>
            <person name="Morbin M."/>
            <person name="Baratta S."/>
            <person name="Lauria G."/>
            <person name="Ciano C."/>
            <person name="Sghirlanzoni A."/>
        </authorList>
    </citation>
    <scope>VARIANT CMT1D HIS-381</scope>
</reference>
<reference key="18">
    <citation type="journal article" date="2001" name="J. Neurol. Sci.">
        <title>A novel missense mutation in the early growth response 2 gene associated with late-onset Charcot-Marie-Tooth disease type 1.</title>
        <authorList>
            <person name="Yoshihara T."/>
            <person name="Kanda F."/>
            <person name="Yamamoto M."/>
            <person name="Ishihara H."/>
            <person name="Misu K."/>
            <person name="Hattori N."/>
            <person name="Chihara K."/>
            <person name="Sobue G."/>
        </authorList>
    </citation>
    <scope>VARIANT CMT1D CYS-381</scope>
</reference>
<reference key="19">
    <citation type="journal article" date="2003" name="J. Neurol. Sci.">
        <title>Screening of the early growth response 2 gene in Japanese patients with Charcot-Marie-Tooth disease type 1.</title>
        <authorList>
            <person name="Numakura C."/>
            <person name="Shirahata E."/>
            <person name="Yamashita S."/>
            <person name="Kanai M."/>
            <person name="Kijima K."/>
            <person name="Matsuki T."/>
            <person name="Hayasaka K."/>
        </authorList>
    </citation>
    <scope>VARIANT CMT1D TYR-383</scope>
</reference>
<reference key="20">
    <citation type="journal article" date="2004" name="Hum. Mutat.">
        <title>Mutational analysis of PMP22, MPZ, GJB1, EGR2 and NEFL in Korean Charcot-Marie-Tooth neuropathy patients.</title>
        <authorList>
            <person name="Choi B.-O."/>
            <person name="Lee M.S."/>
            <person name="Shin S.H."/>
            <person name="Hwang J.H."/>
            <person name="Choi K.-G."/>
            <person name="Kim W.-K."/>
            <person name="Sunwoo I.N."/>
            <person name="Kim N.K."/>
            <person name="Chung K.W."/>
        </authorList>
    </citation>
    <scope>VARIANT CMT1D TRP-359</scope>
</reference>
<reference key="21">
    <citation type="journal article" date="2005" name="Neurogenetics">
        <title>Two missense mutations of EGR2 R359W and GJB1 V136A in a Charcot-Marie-Tooth disease family.</title>
        <authorList>
            <person name="Chung K.W."/>
            <person name="Sunwoo I.N."/>
            <person name="Kim S.M."/>
            <person name="Park K.D."/>
            <person name="Kim W.-K."/>
            <person name="Kim T.S."/>
            <person name="Koo H."/>
            <person name="Cho M."/>
            <person name="Lee J."/>
            <person name="Choi B.O."/>
        </authorList>
    </citation>
    <scope>VARIANT CMT1D TRP-359</scope>
</reference>
<reference key="22">
    <citation type="journal article" date="2007" name="Neurogenetics">
        <title>Functional, histopathologic and natural history study of neuropathy associated with EGR2 mutations.</title>
        <authorList>
            <person name="Szigeti K."/>
            <person name="Wiszniewski W."/>
            <person name="Saifi G.M."/>
            <person name="Sherman D.L."/>
            <person name="Sule N."/>
            <person name="Adesina A.M."/>
            <person name="Mancias P."/>
            <person name="Papasozomenos S.C."/>
            <person name="Miller G."/>
            <person name="Keppen L."/>
            <person name="Daentl D."/>
            <person name="Brophy P.J."/>
            <person name="Lupski J.R."/>
        </authorList>
    </citation>
    <scope>VARIANT DSS LYS-412</scope>
    <scope>CHARACTERIZATION OF VARIANTS CHN1 ASN-268</scope>
    <scope>CHARACTERIZATION OF VARIANTS DSS TRP-359 AND LYS-412</scope>
    <scope>CHARACTERIZATION OF VARIANTS CMT1D TRP-359</scope>
    <scope>FUNCTION</scope>
</reference>
<reference key="23">
    <citation type="journal article" date="2012" name="Ann. Neurol.">
        <title>Homozygous deletion of an EGR2 enhancer in congenital amyelinating neuropathy.</title>
        <authorList>
            <person name="Funalot B."/>
            <person name="Topilko P."/>
            <person name="Arroyo M.A."/>
            <person name="Sefiani A."/>
            <person name="Hedley-Whyte E.T."/>
            <person name="Yoldi M.E."/>
            <person name="Richard L."/>
            <person name="Touraille E."/>
            <person name="Laurichesse M."/>
            <person name="Khalifa E."/>
            <person name="Chauzeix J."/>
            <person name="Ouedraogo A."/>
            <person name="Cros D."/>
            <person name="Magdelaine C."/>
            <person name="Sturtz F.G."/>
            <person name="Urtizberea J.A."/>
            <person name="Charnay P."/>
            <person name="Bragado F.G."/>
            <person name="Vallat J.M."/>
        </authorList>
    </citation>
    <scope>INVOLVEMENT IN CHN1</scope>
</reference>
<reference key="24">
    <citation type="journal article" date="2012" name="J. Peripher. Nerv. Syst.">
        <title>A novel EGR2 mutation within a family with a mild demyelinating form of Charcot-Marie-Tooth disease.</title>
        <authorList>
            <person name="Shiga K."/>
            <person name="Noto Y."/>
            <person name="Mizuta I."/>
            <person name="Hashiguchi A."/>
            <person name="Takashima H."/>
            <person name="Nakagawa M."/>
        </authorList>
    </citation>
    <scope>VARIANT CMT1D ASN-387</scope>
</reference>
<reference key="25">
    <citation type="journal article" date="2012" name="Neuromuscul. Disord.">
        <title>Charcot-Marie-Tooth neuropathy due to a novel EGR2 gene mutation with mild phenotype--usefulness of human mapping chip linkage analysis in a Czech family.</title>
        <authorList>
            <person name="Safka Brozkova D."/>
            <person name="Nevsimalova S."/>
            <person name="Mazanec R."/>
            <person name="Rautenstrauss B."/>
            <person name="Seeman P."/>
        </authorList>
    </citation>
    <scope>VARIANT CMT1D GLY-412</scope>
</reference>
<reference key="26">
    <citation type="journal article" date="2019" name="J. Peripher. Nerv. Syst.">
        <title>A novel family with axonal Charcot-Marie-Tooth disease caused by a mutation in the EGR2 gene.</title>
        <authorList>
            <person name="Tozza S."/>
            <person name="Magri S."/>
            <person name="Pennisi E.M."/>
            <person name="Schirinzi E."/>
            <person name="Pisciotta C."/>
            <person name="Balistreri F."/>
            <person name="Severi D."/>
            <person name="Ricci G."/>
            <person name="Siciliano G."/>
            <person name="Taroni F."/>
            <person name="Santoro L."/>
            <person name="Manganelli F."/>
        </authorList>
    </citation>
    <scope>VARIANT CMT1D GLY-412</scope>
    <scope>CHARACTERIZATION OF VARIANT CMT1D GLY-412</scope>
</reference>
<reference key="27">
    <citation type="journal article" date="2019" name="Sci. Rep.">
        <title>A de novo EGR2 variant, c.1232A &gt; G p.Asp411Gly, causes severe early-onset Charcot-Marie-Tooth Neuropathy Type 3 (Dejerine-Sottas Neuropathy).</title>
        <authorList>
            <person name="Grosz B.R."/>
            <person name="Golovchenko N.B."/>
            <person name="Ellis M."/>
            <person name="Kumar K."/>
            <person name="Nicholson G.A."/>
            <person name="Antonellis A."/>
            <person name="Kennerson M.L."/>
        </authorList>
    </citation>
    <scope>VARIANT DSS GLY-411</scope>
</reference>
<sequence length="476" mass="50302">MMTAKAVDKIPVTLSGFVHQLSDNIYPVEDLAATSVTIFPNAELGGPFDQMNGVAGDGMINIDMTGEKRSLDLPYPSSFAPVSAPRNQTFTYMGKFSIDPQYPGASCYPEGIINIVSAGILQGVTSPASTTASSSVTSASPNPLATGPLGVCTMSQTQPDLDHLYSPPPPPPPYSGCAGDLYQDPSAFLSAATTSTSSSLAYPPPPSYPSPKPATDPGLFPMIPDYPGFFPSQCQRDLHGTAGPDRKPFPCPLDTLRVPPPLTPLSTIRNFTLGGPSAGVTGPGASGGSEGPRLPGSSSAAAAAAAAAAYNPHHLPLRPILRPRKYPNRPSKTPVHERPYPCPAEGCDRRFSRSDELTRHIRIHTGHKPFQCRICMRNFSRSDHLTTHIRTHTGEKPFACDYCGRKFARSDERKRHTKIHLRQKERKSSAPSASVPAPSTASCSGGVQPGGTLCSSNSSSLGGGPLAPCSSRTRTP</sequence>
<organism>
    <name type="scientific">Homo sapiens</name>
    <name type="common">Human</name>
    <dbReference type="NCBI Taxonomy" id="9606"/>
    <lineage>
        <taxon>Eukaryota</taxon>
        <taxon>Metazoa</taxon>
        <taxon>Chordata</taxon>
        <taxon>Craniata</taxon>
        <taxon>Vertebrata</taxon>
        <taxon>Euteleostomi</taxon>
        <taxon>Mammalia</taxon>
        <taxon>Eutheria</taxon>
        <taxon>Euarchontoglires</taxon>
        <taxon>Primates</taxon>
        <taxon>Haplorrhini</taxon>
        <taxon>Catarrhini</taxon>
        <taxon>Hominidae</taxon>
        <taxon>Homo</taxon>
    </lineage>
</organism>
<protein>
    <recommendedName>
        <fullName>E3 SUMO-protein ligase EGR2</fullName>
        <ecNumber evidence="14">2.3.2.-</ecNumber>
    </recommendedName>
    <alternativeName>
        <fullName>AT591</fullName>
    </alternativeName>
    <alternativeName>
        <fullName evidence="23">E3 SUMO-protein transferase ERG2</fullName>
    </alternativeName>
    <alternativeName>
        <fullName>Early growth response protein 2</fullName>
        <shortName>EGR-2</shortName>
    </alternativeName>
    <alternativeName>
        <fullName>Zinc finger protein Krox-20</fullName>
    </alternativeName>
</protein>
<keyword id="KW-0007">Acetylation</keyword>
<keyword id="KW-0010">Activator</keyword>
<keyword id="KW-0025">Alternative splicing</keyword>
<keyword id="KW-0144">Charcot-Marie-Tooth disease</keyword>
<keyword id="KW-0213">Dejerine-Sottas syndrome</keyword>
<keyword id="KW-0225">Disease variant</keyword>
<keyword id="KW-0238">DNA-binding</keyword>
<keyword id="KW-0479">Metal-binding</keyword>
<keyword id="KW-0523">Neurodegeneration</keyword>
<keyword id="KW-0622">Neuropathy</keyword>
<keyword id="KW-0539">Nucleus</keyword>
<keyword id="KW-1267">Proteomics identification</keyword>
<keyword id="KW-1185">Reference proteome</keyword>
<keyword id="KW-0677">Repeat</keyword>
<keyword id="KW-0804">Transcription</keyword>
<keyword id="KW-0805">Transcription regulation</keyword>
<keyword id="KW-0808">Transferase</keyword>
<keyword id="KW-0832">Ubl conjugation</keyword>
<keyword id="KW-0833">Ubl conjugation pathway</keyword>
<keyword id="KW-0862">Zinc</keyword>
<keyword id="KW-0863">Zinc-finger</keyword>
<feature type="chain" id="PRO_0000047119" description="E3 SUMO-protein ligase EGR2">
    <location>
        <begin position="1"/>
        <end position="476"/>
    </location>
</feature>
<feature type="zinc finger region" description="C2H2-type 1" evidence="2">
    <location>
        <begin position="340"/>
        <end position="364"/>
    </location>
</feature>
<feature type="zinc finger region" description="C2H2-type 2" evidence="2">
    <location>
        <begin position="370"/>
        <end position="392"/>
    </location>
</feature>
<feature type="zinc finger region" description="C2H2-type 3" evidence="2">
    <location>
        <begin position="398"/>
        <end position="420"/>
    </location>
</feature>
<feature type="region of interest" description="Disordered" evidence="3">
    <location>
        <begin position="127"/>
        <end position="178"/>
    </location>
</feature>
<feature type="region of interest" description="Disordered" evidence="3">
    <location>
        <begin position="275"/>
        <end position="300"/>
    </location>
</feature>
<feature type="region of interest" description="Disordered" evidence="3">
    <location>
        <begin position="318"/>
        <end position="341"/>
    </location>
</feature>
<feature type="region of interest" description="Disordered" evidence="3">
    <location>
        <begin position="412"/>
        <end position="476"/>
    </location>
</feature>
<feature type="short sequence motif" description="HCFC1-binding-motif (HBM)">
    <location>
        <begin position="162"/>
        <end position="165"/>
    </location>
</feature>
<feature type="compositionally biased region" description="Low complexity" evidence="3">
    <location>
        <begin position="127"/>
        <end position="141"/>
    </location>
</feature>
<feature type="compositionally biased region" description="Gly residues" evidence="3">
    <location>
        <begin position="281"/>
        <end position="290"/>
    </location>
</feature>
<feature type="compositionally biased region" description="Basic residues" evidence="3">
    <location>
        <begin position="415"/>
        <end position="425"/>
    </location>
</feature>
<feature type="compositionally biased region" description="Low complexity" evidence="3">
    <location>
        <begin position="429"/>
        <end position="476"/>
    </location>
</feature>
<feature type="modified residue" description="N6-acetyllysine; by EP300" evidence="1">
    <location>
        <position position="247"/>
    </location>
</feature>
<feature type="splice variant" id="VSP_006863" description="In isoform Short." evidence="22">
    <location>
        <begin position="1"/>
        <end position="50"/>
    </location>
</feature>
<feature type="sequence variant" id="VAR_007735" description="In CHN1; loss of large and small myelinated nerve fibers; dbSNP:rs104894158." evidence="12 20">
    <original>I</original>
    <variation>N</variation>
    <location>
        <position position="268"/>
    </location>
</feature>
<feature type="sequence variant" id="VAR_007736" description="In CMT1D; dbSNP:rs1589080611." evidence="5 21">
    <original>D</original>
    <variation>V</variation>
    <location>
        <position position="355"/>
    </location>
</feature>
<feature type="sequence variant" id="VAR_009874" description="In DSS and CMT1D; loss of DNA binding and loss of transactivation activity; loss of small and large myelinated nerve fibers; residual fibers with thin myelin sheaths; dbSNP:rs104894161." evidence="4 10 11 12">
    <original>R</original>
    <variation>W</variation>
    <location>
        <position position="359"/>
    </location>
</feature>
<feature type="sequence variant" id="VAR_029958" description="In CMT1D; dbSNP:rs1589080524." evidence="7">
    <original>R</original>
    <variation>C</variation>
    <location>
        <position position="381"/>
    </location>
</feature>
<feature type="sequence variant" id="VAR_009875" description="In CMT1D; dbSNP:rs281865137." evidence="6">
    <original>R</original>
    <variation>H</variation>
    <location>
        <position position="381"/>
    </location>
</feature>
<feature type="sequence variant" id="VAR_007737" description="In CHN1." evidence="20">
    <original>SD</original>
    <variation>RY</variation>
    <location>
        <begin position="382"/>
        <end position="383"/>
    </location>
</feature>
<feature type="sequence variant" id="VAR_029959" description="In CMT1D; dbSNP:rs104894160." evidence="8">
    <original>D</original>
    <variation>Y</variation>
    <location>
        <position position="383"/>
    </location>
</feature>
<feature type="sequence variant" id="VAR_083343" description="In CMT1D; uncertain significance; dbSNP:rs281865139." evidence="17">
    <original>T</original>
    <variation>N</variation>
    <location>
        <position position="387"/>
    </location>
</feature>
<feature type="sequence variant" id="VAR_007738" description="In CMT1D; dbSNP:rs104894159." evidence="20">
    <original>R</original>
    <variation>W</variation>
    <location>
        <position position="409"/>
    </location>
</feature>
<feature type="sequence variant" id="VAR_083344" description="In DSS." evidence="19">
    <original>D</original>
    <variation>G</variation>
    <location>
        <position position="411"/>
    </location>
</feature>
<feature type="sequence variant" id="VAR_083345" description="In CMT1D; loss of myelinated and unmyelinated nerve fibers; dbSNP:rs749558026." evidence="16 18">
    <original>E</original>
    <variation>G</variation>
    <location>
        <position position="412"/>
    </location>
</feature>
<feature type="sequence variant" id="VAR_083346" description="In DSS; loss of DNA binding and loss of transactivation activity; dbSNP:rs121434563." evidence="12">
    <original>E</original>
    <variation>K</variation>
    <location>
        <position position="412"/>
    </location>
</feature>
<feature type="mutagenesis site" description="Inhibits association with HCFC1." evidence="9">
    <original>DHLY</original>
    <variation>AAAA</variation>
    <location>
        <begin position="162"/>
        <end position="165"/>
    </location>
</feature>
<feature type="sequence conflict" description="In Ref. 5; CAH18435." evidence="23" ref="5">
    <original>K</original>
    <variation>R</variation>
    <location>
        <position position="68"/>
    </location>
</feature>
<feature type="sequence conflict" description="In Ref. 8; AAH35625." evidence="23" ref="8">
    <original>K</original>
    <variation>KPFPCPLDTLRVPPPLTPLSTIRK</variation>
    <location>
        <position position="247"/>
    </location>
</feature>
<feature type="sequence conflict" description="In Ref. 1; AAA52372." evidence="23" ref="1">
    <original>V</original>
    <variation>M</variation>
    <location>
        <position position="280"/>
    </location>
</feature>